<comment type="catalytic activity">
    <reaction evidence="1">
        <text>tRNA(Gly) + glycine + ATP = glycyl-tRNA(Gly) + AMP + diphosphate</text>
        <dbReference type="Rhea" id="RHEA:16013"/>
        <dbReference type="Rhea" id="RHEA-COMP:9664"/>
        <dbReference type="Rhea" id="RHEA-COMP:9683"/>
        <dbReference type="ChEBI" id="CHEBI:30616"/>
        <dbReference type="ChEBI" id="CHEBI:33019"/>
        <dbReference type="ChEBI" id="CHEBI:57305"/>
        <dbReference type="ChEBI" id="CHEBI:78442"/>
        <dbReference type="ChEBI" id="CHEBI:78522"/>
        <dbReference type="ChEBI" id="CHEBI:456215"/>
        <dbReference type="EC" id="6.1.1.14"/>
    </reaction>
</comment>
<comment type="subunit">
    <text evidence="1">Tetramer of two alpha and two beta subunits.</text>
</comment>
<comment type="subcellular location">
    <subcellularLocation>
        <location evidence="1">Cytoplasm</location>
    </subcellularLocation>
</comment>
<comment type="similarity">
    <text evidence="1">Belongs to the class-II aminoacyl-tRNA synthetase family.</text>
</comment>
<accession>Q71ZL2</accession>
<name>SYGB_LISMF</name>
<organism>
    <name type="scientific">Listeria monocytogenes serotype 4b (strain F2365)</name>
    <dbReference type="NCBI Taxonomy" id="265669"/>
    <lineage>
        <taxon>Bacteria</taxon>
        <taxon>Bacillati</taxon>
        <taxon>Bacillota</taxon>
        <taxon>Bacilli</taxon>
        <taxon>Bacillales</taxon>
        <taxon>Listeriaceae</taxon>
        <taxon>Listeria</taxon>
    </lineage>
</organism>
<keyword id="KW-0030">Aminoacyl-tRNA synthetase</keyword>
<keyword id="KW-0067">ATP-binding</keyword>
<keyword id="KW-0963">Cytoplasm</keyword>
<keyword id="KW-0436">Ligase</keyword>
<keyword id="KW-0547">Nucleotide-binding</keyword>
<keyword id="KW-0648">Protein biosynthesis</keyword>
<reference key="1">
    <citation type="journal article" date="2004" name="Nucleic Acids Res.">
        <title>Whole genome comparisons of serotype 4b and 1/2a strains of the food-borne pathogen Listeria monocytogenes reveal new insights into the core genome components of this species.</title>
        <authorList>
            <person name="Nelson K.E."/>
            <person name="Fouts D.E."/>
            <person name="Mongodin E.F."/>
            <person name="Ravel J."/>
            <person name="DeBoy R.T."/>
            <person name="Kolonay J.F."/>
            <person name="Rasko D.A."/>
            <person name="Angiuoli S.V."/>
            <person name="Gill S.R."/>
            <person name="Paulsen I.T."/>
            <person name="Peterson J.D."/>
            <person name="White O."/>
            <person name="Nelson W.C."/>
            <person name="Nierman W.C."/>
            <person name="Beanan M.J."/>
            <person name="Brinkac L.M."/>
            <person name="Daugherty S.C."/>
            <person name="Dodson R.J."/>
            <person name="Durkin A.S."/>
            <person name="Madupu R."/>
            <person name="Haft D.H."/>
            <person name="Selengut J."/>
            <person name="Van Aken S.E."/>
            <person name="Khouri H.M."/>
            <person name="Fedorova N."/>
            <person name="Forberger H.A."/>
            <person name="Tran B."/>
            <person name="Kathariou S."/>
            <person name="Wonderling L.D."/>
            <person name="Uhlich G.A."/>
            <person name="Bayles D.O."/>
            <person name="Luchansky J.B."/>
            <person name="Fraser C.M."/>
        </authorList>
    </citation>
    <scope>NUCLEOTIDE SEQUENCE [LARGE SCALE GENOMIC DNA]</scope>
    <source>
        <strain>F2365</strain>
    </source>
</reference>
<gene>
    <name evidence="1" type="primary">glyS</name>
    <name type="ordered locus">LMOf2365_1477</name>
</gene>
<dbReference type="EC" id="6.1.1.14" evidence="1"/>
<dbReference type="EMBL" id="AE017262">
    <property type="protein sequence ID" value="AAT04252.1"/>
    <property type="molecule type" value="Genomic_DNA"/>
</dbReference>
<dbReference type="RefSeq" id="WP_003726011.1">
    <property type="nucleotide sequence ID" value="NC_002973.6"/>
</dbReference>
<dbReference type="SMR" id="Q71ZL2"/>
<dbReference type="KEGG" id="lmf:LMOf2365_1477"/>
<dbReference type="HOGENOM" id="CLU_007220_2_2_9"/>
<dbReference type="GO" id="GO:0005829">
    <property type="term" value="C:cytosol"/>
    <property type="evidence" value="ECO:0007669"/>
    <property type="project" value="TreeGrafter"/>
</dbReference>
<dbReference type="GO" id="GO:0004814">
    <property type="term" value="F:arginine-tRNA ligase activity"/>
    <property type="evidence" value="ECO:0007669"/>
    <property type="project" value="InterPro"/>
</dbReference>
<dbReference type="GO" id="GO:0005524">
    <property type="term" value="F:ATP binding"/>
    <property type="evidence" value="ECO:0007669"/>
    <property type="project" value="UniProtKB-UniRule"/>
</dbReference>
<dbReference type="GO" id="GO:0004820">
    <property type="term" value="F:glycine-tRNA ligase activity"/>
    <property type="evidence" value="ECO:0007669"/>
    <property type="project" value="UniProtKB-UniRule"/>
</dbReference>
<dbReference type="GO" id="GO:0006420">
    <property type="term" value="P:arginyl-tRNA aminoacylation"/>
    <property type="evidence" value="ECO:0007669"/>
    <property type="project" value="InterPro"/>
</dbReference>
<dbReference type="GO" id="GO:0006426">
    <property type="term" value="P:glycyl-tRNA aminoacylation"/>
    <property type="evidence" value="ECO:0007669"/>
    <property type="project" value="UniProtKB-UniRule"/>
</dbReference>
<dbReference type="HAMAP" id="MF_00255">
    <property type="entry name" value="Gly_tRNA_synth_beta"/>
    <property type="match status" value="1"/>
</dbReference>
<dbReference type="InterPro" id="IPR008909">
    <property type="entry name" value="DALR_anticod-bd"/>
</dbReference>
<dbReference type="InterPro" id="IPR015944">
    <property type="entry name" value="Gly-tRNA-synth_bsu"/>
</dbReference>
<dbReference type="InterPro" id="IPR006194">
    <property type="entry name" value="Gly-tRNA-synth_heterodimer"/>
</dbReference>
<dbReference type="NCBIfam" id="TIGR00211">
    <property type="entry name" value="glyS"/>
    <property type="match status" value="1"/>
</dbReference>
<dbReference type="PANTHER" id="PTHR30075:SF2">
    <property type="entry name" value="GLYCINE--TRNA LIGASE, CHLOROPLASTIC_MITOCHONDRIAL 2"/>
    <property type="match status" value="1"/>
</dbReference>
<dbReference type="PANTHER" id="PTHR30075">
    <property type="entry name" value="GLYCYL-TRNA SYNTHETASE"/>
    <property type="match status" value="1"/>
</dbReference>
<dbReference type="Pfam" id="PF05746">
    <property type="entry name" value="DALR_1"/>
    <property type="match status" value="1"/>
</dbReference>
<dbReference type="Pfam" id="PF02092">
    <property type="entry name" value="tRNA_synt_2f"/>
    <property type="match status" value="1"/>
</dbReference>
<dbReference type="PRINTS" id="PR01045">
    <property type="entry name" value="TRNASYNTHGB"/>
</dbReference>
<dbReference type="SUPFAM" id="SSF109604">
    <property type="entry name" value="HD-domain/PDEase-like"/>
    <property type="match status" value="1"/>
</dbReference>
<dbReference type="PROSITE" id="PS50861">
    <property type="entry name" value="AA_TRNA_LIGASE_II_GLYAB"/>
    <property type="match status" value="1"/>
</dbReference>
<feature type="chain" id="PRO_0000072911" description="Glycine--tRNA ligase beta subunit">
    <location>
        <begin position="1"/>
        <end position="688"/>
    </location>
</feature>
<sequence length="688" mass="78502">MSKDFLLEIGLEEMPAKYVTSSVLQLEKRVTDWLKDNQIEFKEIKTYSTPRRLTVLVEEMAEEQANRVEEAKGPAKKIALDDEGNWSKAALGFAKSQKVAPEDLTFREIKGVEYIYIKKEVIGEKTTALLPSLEKVVTSMTFPVSMHWGSNDLRYIRPIKWLIAMFGEEIIPFEITGVSTSNTSRGHRFLGKTATINQPSDYPNALLEQFVVVNASERKQAIVEQLRELETMENWQIREDDDLLEEVTNLVEYPTVLAGNFEKEYLELPEEVLITTMKEHQRYFPVFSQEGELLPHFVTVRNGNHENLDTVARGNEKVLRARLSDADFFYQEDLKITIDEAVAKLQNIVFHEKLGTLTEKMKRVQKVALMLADYLNWQEEDKQDIIRLTNIYKFDLVTNIVGEFPELQGLMGEKYALLQGEKPAIATAIREHYLPSSAEGDLPQTDLGSLIAIADKLETLIGFFCVNIAPTGSADPFGLRRSAFGAVRIIQANGWDIPMLEVVSRIVDMERAEGATELPSSDVIKEVQTFLKNRLRVILQGHHIRHDIIDAVIGGDPNMIPQLIDRAQILNKHADAEWFRPTIEALTRVVNISKKYEDGVEVDPSLFENEYEQALFDKLEKLKFDFAGLKIVDRLKAFADLRTTIDAYFDNTLVMTDNDELKNNRLALLFELASFIKEFAQMDEINVK</sequence>
<protein>
    <recommendedName>
        <fullName evidence="1">Glycine--tRNA ligase beta subunit</fullName>
        <ecNumber evidence="1">6.1.1.14</ecNumber>
    </recommendedName>
    <alternativeName>
        <fullName evidence="1">Glycyl-tRNA synthetase beta subunit</fullName>
        <shortName evidence="1">GlyRS</shortName>
    </alternativeName>
</protein>
<proteinExistence type="inferred from homology"/>
<evidence type="ECO:0000255" key="1">
    <source>
        <dbReference type="HAMAP-Rule" id="MF_00255"/>
    </source>
</evidence>